<dbReference type="EMBL" id="AJ427339">
    <property type="protein sequence ID" value="CAD22113.1"/>
    <property type="molecule type" value="mRNA"/>
</dbReference>
<dbReference type="EMBL" id="AJ441110">
    <property type="protein sequence ID" value="CAD29585.2"/>
    <property type="molecule type" value="mRNA"/>
</dbReference>
<dbReference type="EMBL" id="AJ496322">
    <property type="protein sequence ID" value="CAD42881.1"/>
    <property type="molecule type" value="mRNA"/>
</dbReference>
<dbReference type="EMBL" id="AJ515158">
    <property type="protein sequence ID" value="CAD56470.1"/>
    <property type="molecule type" value="mRNA"/>
</dbReference>
<dbReference type="EMBL" id="AJ515428">
    <property type="protein sequence ID" value="CAD56438.1"/>
    <property type="molecule type" value="mRNA"/>
</dbReference>
<dbReference type="EMBL" id="AJ515429">
    <property type="protein sequence ID" value="CAD56439.1"/>
    <property type="molecule type" value="mRNA"/>
</dbReference>
<dbReference type="EMBL" id="AK090486">
    <property type="protein sequence ID" value="BAC03467.1"/>
    <property type="status" value="ALT_FRAME"/>
    <property type="molecule type" value="mRNA"/>
</dbReference>
<dbReference type="EMBL" id="AK057437">
    <property type="protein sequence ID" value="BAB71487.1"/>
    <property type="molecule type" value="mRNA"/>
</dbReference>
<dbReference type="EMBL" id="AL831963">
    <property type="protein sequence ID" value="CAD38605.1"/>
    <property type="molecule type" value="mRNA"/>
</dbReference>
<dbReference type="EMBL" id="AL832600">
    <property type="protein sequence ID" value="CAH10384.1"/>
    <property type="status" value="ALT_TERM"/>
    <property type="molecule type" value="mRNA"/>
</dbReference>
<dbReference type="EMBL" id="CH471062">
    <property type="protein sequence ID" value="EAW62402.1"/>
    <property type="molecule type" value="Genomic_DNA"/>
</dbReference>
<dbReference type="EMBL" id="CH471062">
    <property type="protein sequence ID" value="EAW62405.1"/>
    <property type="molecule type" value="Genomic_DNA"/>
</dbReference>
<dbReference type="EMBL" id="BC017066">
    <property type="protein sequence ID" value="AAH17066.1"/>
    <property type="status" value="ALT_INIT"/>
    <property type="molecule type" value="mRNA"/>
</dbReference>
<dbReference type="CCDS" id="CCDS4143.1">
    <molecule id="Q96M27-1"/>
</dbReference>
<dbReference type="CCDS" id="CCDS68943.1">
    <molecule id="Q96M27-3"/>
</dbReference>
<dbReference type="RefSeq" id="NP_001273737.1">
    <molecule id="Q96M27-3"/>
    <property type="nucleotide sequence ID" value="NM_001286808.2"/>
</dbReference>
<dbReference type="RefSeq" id="NP_570721.1">
    <molecule id="Q96M27-1"/>
    <property type="nucleotide sequence ID" value="NM_130809.5"/>
</dbReference>
<dbReference type="RefSeq" id="XP_006714592.1">
    <property type="nucleotide sequence ID" value="XM_006714529.3"/>
</dbReference>
<dbReference type="SMR" id="Q96M27"/>
<dbReference type="BioGRID" id="126367">
    <property type="interactions" value="70"/>
</dbReference>
<dbReference type="FunCoup" id="Q96M27">
    <property type="interactions" value="1376"/>
</dbReference>
<dbReference type="IntAct" id="Q96M27">
    <property type="interactions" value="28"/>
</dbReference>
<dbReference type="MINT" id="Q96M27"/>
<dbReference type="STRING" id="9606.ENSP00000421965"/>
<dbReference type="GlyCosmos" id="Q96M27">
    <property type="glycosylation" value="26 sites, 2 glycans"/>
</dbReference>
<dbReference type="GlyGen" id="Q96M27">
    <property type="glycosylation" value="26 sites, 2 O-linked glycans (26 sites)"/>
</dbReference>
<dbReference type="iPTMnet" id="Q96M27"/>
<dbReference type="MetOSite" id="Q96M27"/>
<dbReference type="PhosphoSitePlus" id="Q96M27"/>
<dbReference type="BioMuta" id="PRRC1"/>
<dbReference type="DMDM" id="74732288"/>
<dbReference type="jPOST" id="Q96M27"/>
<dbReference type="MassIVE" id="Q96M27"/>
<dbReference type="PaxDb" id="9606-ENSP00000421965"/>
<dbReference type="PeptideAtlas" id="Q96M27"/>
<dbReference type="ProteomicsDB" id="77284">
    <molecule id="Q96M27-1"/>
</dbReference>
<dbReference type="ProteomicsDB" id="77285">
    <molecule id="Q96M27-2"/>
</dbReference>
<dbReference type="ProteomicsDB" id="77286">
    <molecule id="Q96M27-3"/>
</dbReference>
<dbReference type="ProteomicsDB" id="77287">
    <molecule id="Q96M27-4"/>
</dbReference>
<dbReference type="ProteomicsDB" id="77288">
    <molecule id="Q96M27-5"/>
</dbReference>
<dbReference type="Pumba" id="Q96M27"/>
<dbReference type="Antibodypedia" id="45054">
    <property type="antibodies" value="65 antibodies from 17 providers"/>
</dbReference>
<dbReference type="DNASU" id="133619"/>
<dbReference type="Ensembl" id="ENST00000296666.13">
    <molecule id="Q96M27-1"/>
    <property type="protein sequence ID" value="ENSP00000296666.9"/>
    <property type="gene ID" value="ENSG00000164244.22"/>
</dbReference>
<dbReference type="Ensembl" id="ENST00000442138.6">
    <molecule id="Q96M27-5"/>
    <property type="protein sequence ID" value="ENSP00000392873.2"/>
    <property type="gene ID" value="ENSG00000164244.22"/>
</dbReference>
<dbReference type="Ensembl" id="ENST00000512635.2">
    <molecule id="Q96M27-3"/>
    <property type="protein sequence ID" value="ENSP00000421965.2"/>
    <property type="gene ID" value="ENSG00000164244.22"/>
</dbReference>
<dbReference type="Ensembl" id="ENST00000715263.1">
    <molecule id="Q96M27-1"/>
    <property type="protein sequence ID" value="ENSP00000520434.1"/>
    <property type="gene ID" value="ENSG00000164244.22"/>
</dbReference>
<dbReference type="GeneID" id="133619"/>
<dbReference type="KEGG" id="hsa:133619"/>
<dbReference type="MANE-Select" id="ENST00000296666.13">
    <property type="protein sequence ID" value="ENSP00000296666.9"/>
    <property type="RefSeq nucleotide sequence ID" value="NM_130809.5"/>
    <property type="RefSeq protein sequence ID" value="NP_570721.1"/>
</dbReference>
<dbReference type="UCSC" id="uc003kuj.6">
    <molecule id="Q96M27-1"/>
    <property type="organism name" value="human"/>
</dbReference>
<dbReference type="AGR" id="HGNC:28164"/>
<dbReference type="CTD" id="133619"/>
<dbReference type="DisGeNET" id="133619"/>
<dbReference type="GeneCards" id="PRRC1"/>
<dbReference type="HGNC" id="HGNC:28164">
    <property type="gene designation" value="PRRC1"/>
</dbReference>
<dbReference type="HPA" id="ENSG00000164244">
    <property type="expression patterns" value="Low tissue specificity"/>
</dbReference>
<dbReference type="neXtProt" id="NX_Q96M27"/>
<dbReference type="OpenTargets" id="ENSG00000164244"/>
<dbReference type="PharmGKB" id="PA162400175"/>
<dbReference type="VEuPathDB" id="HostDB:ENSG00000164244"/>
<dbReference type="eggNOG" id="ENOG502QUZV">
    <property type="taxonomic scope" value="Eukaryota"/>
</dbReference>
<dbReference type="GeneTree" id="ENSGT00390000003837"/>
<dbReference type="HOGENOM" id="CLU_041959_0_0_1"/>
<dbReference type="InParanoid" id="Q96M27"/>
<dbReference type="OMA" id="ELFPDQW"/>
<dbReference type="OrthoDB" id="4968544at2759"/>
<dbReference type="PAN-GO" id="Q96M27">
    <property type="GO annotations" value="3 GO annotations based on evolutionary models"/>
</dbReference>
<dbReference type="PhylomeDB" id="Q96M27"/>
<dbReference type="TreeFam" id="TF343676"/>
<dbReference type="PathwayCommons" id="Q96M27"/>
<dbReference type="SignaLink" id="Q96M27"/>
<dbReference type="BioGRID-ORCS" id="133619">
    <property type="hits" value="26 hits in 1156 CRISPR screens"/>
</dbReference>
<dbReference type="ChiTaRS" id="PRRC1">
    <property type="organism name" value="human"/>
</dbReference>
<dbReference type="GenomeRNAi" id="133619"/>
<dbReference type="Pharos" id="Q96M27">
    <property type="development level" value="Tdark"/>
</dbReference>
<dbReference type="PRO" id="PR:Q96M27"/>
<dbReference type="Proteomes" id="UP000005640">
    <property type="component" value="Chromosome 5"/>
</dbReference>
<dbReference type="RNAct" id="Q96M27">
    <property type="molecule type" value="protein"/>
</dbReference>
<dbReference type="Bgee" id="ENSG00000164244">
    <property type="expression patterns" value="Expressed in tibia and 195 other cell types or tissues"/>
</dbReference>
<dbReference type="GO" id="GO:0005737">
    <property type="term" value="C:cytoplasm"/>
    <property type="evidence" value="ECO:0000318"/>
    <property type="project" value="GO_Central"/>
</dbReference>
<dbReference type="GO" id="GO:0005794">
    <property type="term" value="C:Golgi apparatus"/>
    <property type="evidence" value="ECO:0007669"/>
    <property type="project" value="UniProtKB-SubCell"/>
</dbReference>
<dbReference type="GO" id="GO:0042802">
    <property type="term" value="F:identical protein binding"/>
    <property type="evidence" value="ECO:0007669"/>
    <property type="project" value="Ensembl"/>
</dbReference>
<dbReference type="GO" id="GO:0034237">
    <property type="term" value="F:protein kinase A regulatory subunit binding"/>
    <property type="evidence" value="ECO:0000318"/>
    <property type="project" value="GO_Central"/>
</dbReference>
<dbReference type="GO" id="GO:0010669">
    <property type="term" value="P:epithelial structure maintenance"/>
    <property type="evidence" value="ECO:0000318"/>
    <property type="project" value="GO_Central"/>
</dbReference>
<dbReference type="FunFam" id="3.90.950.10:FF:000006">
    <property type="entry name" value="PRRC1 isoform 1"/>
    <property type="match status" value="1"/>
</dbReference>
<dbReference type="Gene3D" id="3.90.950.10">
    <property type="match status" value="1"/>
</dbReference>
<dbReference type="InterPro" id="IPR029001">
    <property type="entry name" value="ITPase-like_fam"/>
</dbReference>
<dbReference type="InterPro" id="IPR026533">
    <property type="entry name" value="NTPase/PRRC1"/>
</dbReference>
<dbReference type="InterPro" id="IPR026534">
    <property type="entry name" value="PRRC1"/>
</dbReference>
<dbReference type="PANTHER" id="PTHR23276">
    <property type="entry name" value="PROTEIN PRRC1"/>
    <property type="match status" value="1"/>
</dbReference>
<dbReference type="PANTHER" id="PTHR23276:SF2">
    <property type="entry name" value="PROTEIN PRRC1"/>
    <property type="match status" value="1"/>
</dbReference>
<dbReference type="Pfam" id="PF01931">
    <property type="entry name" value="NTPase_I-T"/>
    <property type="match status" value="1"/>
</dbReference>
<dbReference type="SUPFAM" id="SSF52972">
    <property type="entry name" value="ITPase-like"/>
    <property type="match status" value="1"/>
</dbReference>
<sequence>MMEESGIETTPPGTPPPNPAGLAATAMSSTPVPLAATSSFSSPNVSSMESFPPLAYSTPQPPLPPVRPSAPLPFVPPPAVPSVPPLVTSMPPPVSPSTAAAFGNPPVSHFPPSTSAPNTLLPAPPSGPPISGFSVGSTYDITRGHAGRAPQTPLMPSFSAPSGTGLLPTPITQQASLTSLAQGTGTTSAITFPEEQEDPRITRGQDEASAGGIWGFIKGVAGNPMVKSVLDKTKHSVESMITTLDPGMAPYIKSGGELDIVVTSNKEVKVAAVRDAFQEVFGLAVVVGEAGQSNIAPQPVGYAAGLKGAQERIDSLRRTGVIHEKQTAVSVENFIAELLPDKWFDIGCLVVEDPVHGIHLETFTQATPVPLEFVQQAQSLTPQDYNLRWSGLLVTVGEVLEKSLLNVSRTDWHMAFTGMSRRQMIYSAARAIAGMYKQRLPPRTV</sequence>
<feature type="chain" id="PRO_0000307338" description="Protein PRRC1">
    <location>
        <begin position="1"/>
        <end position="445"/>
    </location>
</feature>
<feature type="region of interest" description="Disordered" evidence="2">
    <location>
        <begin position="1"/>
        <end position="71"/>
    </location>
</feature>
<feature type="region of interest" description="Disordered" evidence="2">
    <location>
        <begin position="105"/>
        <end position="167"/>
    </location>
</feature>
<feature type="compositionally biased region" description="Polar residues" evidence="2">
    <location>
        <begin position="27"/>
        <end position="49"/>
    </location>
</feature>
<feature type="compositionally biased region" description="Pro residues" evidence="2">
    <location>
        <begin position="59"/>
        <end position="71"/>
    </location>
</feature>
<feature type="modified residue" description="Phosphoserine" evidence="9">
    <location>
        <position position="209"/>
    </location>
</feature>
<feature type="modified residue" description="Phosphoserine" evidence="8 9">
    <location>
        <position position="408"/>
    </location>
</feature>
<feature type="splice variant" id="VSP_028720" description="In isoform 4." evidence="5">
    <original>E</original>
    <variation>A</variation>
    <location>
        <position position="311"/>
    </location>
</feature>
<feature type="splice variant" id="VSP_028721" description="In isoform 4." evidence="5">
    <location>
        <begin position="312"/>
        <end position="445"/>
    </location>
</feature>
<feature type="splice variant" id="VSP_028722" description="In isoform 5." evidence="6">
    <original>A</original>
    <variation>VGFLLCFFIMLQRNLHYCFQNKNLFGFFVRNMFLILFQSFFF</variation>
    <location>
        <position position="377"/>
    </location>
</feature>
<feature type="splice variant" id="VSP_028723" description="In isoform 5." evidence="6">
    <location>
        <begin position="378"/>
        <end position="445"/>
    </location>
</feature>
<feature type="splice variant" id="VSP_028724" description="In isoform 2." evidence="5">
    <original>AGMYKQRLPPRTV</original>
    <variation>ENPQRAVAVHGLVEARNFPAPGDLVSLLLGTV</variation>
    <location>
        <begin position="433"/>
        <end position="445"/>
    </location>
</feature>
<feature type="splice variant" id="VSP_028725" description="In isoform 3." evidence="5">
    <original>GMYKQRLPPRTV</original>
    <variation>DDYFPRIPKEQWQSMAWLKLEIFLPLVTW</variation>
    <location>
        <begin position="434"/>
        <end position="445"/>
    </location>
</feature>
<feature type="sequence conflict" description="In Ref. 4; CAH10384." evidence="7" ref="4">
    <original>A</original>
    <variation>T</variation>
    <location>
        <position position="70"/>
    </location>
</feature>
<feature type="sequence conflict" description="In Ref. 4; CAH10384." evidence="7" ref="4">
    <original>L</original>
    <variation>S</variation>
    <location>
        <position position="338"/>
    </location>
</feature>
<organism>
    <name type="scientific">Homo sapiens</name>
    <name type="common">Human</name>
    <dbReference type="NCBI Taxonomy" id="9606"/>
    <lineage>
        <taxon>Eukaryota</taxon>
        <taxon>Metazoa</taxon>
        <taxon>Chordata</taxon>
        <taxon>Craniata</taxon>
        <taxon>Vertebrata</taxon>
        <taxon>Euteleostomi</taxon>
        <taxon>Mammalia</taxon>
        <taxon>Eutheria</taxon>
        <taxon>Euarchontoglires</taxon>
        <taxon>Primates</taxon>
        <taxon>Haplorrhini</taxon>
        <taxon>Catarrhini</taxon>
        <taxon>Hominidae</taxon>
        <taxon>Homo</taxon>
    </lineage>
</organism>
<keyword id="KW-0025">Alternative splicing</keyword>
<keyword id="KW-0963">Cytoplasm</keyword>
<keyword id="KW-0333">Golgi apparatus</keyword>
<keyword id="KW-0597">Phosphoprotein</keyword>
<keyword id="KW-1267">Proteomics identification</keyword>
<keyword id="KW-1185">Reference proteome</keyword>
<name>PRRC1_HUMAN</name>
<protein>
    <recommendedName>
        <fullName>Protein PRRC1</fullName>
    </recommendedName>
    <alternativeName>
        <fullName>Proline-rich and coiled-coil-containing protein 1</fullName>
    </alternativeName>
</protein>
<accession>Q96M27</accession>
<accession>Q69YM8</accession>
<accession>Q7L2U7</accession>
<accession>Q86Y42</accession>
<accession>Q8IVJ4</accession>
<accession>Q8IVL4</accession>
<accession>Q8NEZ7</accession>
<accession>Q96AJ3</accession>
<reference key="1">
    <citation type="journal article" date="2005" name="Leuk. Res.">
        <title>Structural analysis and expression profile of a novel gene on chromosome 5q23 encoding a Golgi-associated protein with six splice variants, and involved within the 5q deletion of a Ph(-) CML patient.</title>
        <authorList>
            <person name="Kamakari S."/>
            <person name="Roussou A."/>
            <person name="Jefferson A."/>
            <person name="Ragoussis I."/>
            <person name="Anagnou N.P."/>
        </authorList>
    </citation>
    <scope>NUCLEOTIDE SEQUENCE [MRNA] (ISOFORMS 1; 2; 3 AND 4)</scope>
    <scope>SUBCELLULAR LOCATION</scope>
    <scope>TISSUE SPECIFICITY</scope>
    <source>
        <tissue>Heart</tissue>
        <tissue>Liver</tissue>
        <tissue>Peripheral blood</tissue>
    </source>
</reference>
<reference key="2">
    <citation type="submission" date="2002-07" db="EMBL/GenBank/DDBJ databases">
        <title>The nucleotide sequence of a long cDNA clone isolated from human spleen.</title>
        <authorList>
            <person name="Jikuya H."/>
            <person name="Takano J."/>
            <person name="Kikuno R."/>
            <person name="Nagase T."/>
            <person name="Ohara O."/>
        </authorList>
    </citation>
    <scope>NUCLEOTIDE SEQUENCE [LARGE SCALE MRNA] (ISOFORM 1)</scope>
    <source>
        <tissue>Spleen</tissue>
    </source>
</reference>
<reference key="3">
    <citation type="journal article" date="2004" name="Nat. Genet.">
        <title>Complete sequencing and characterization of 21,243 full-length human cDNAs.</title>
        <authorList>
            <person name="Ota T."/>
            <person name="Suzuki Y."/>
            <person name="Nishikawa T."/>
            <person name="Otsuki T."/>
            <person name="Sugiyama T."/>
            <person name="Irie R."/>
            <person name="Wakamatsu A."/>
            <person name="Hayashi K."/>
            <person name="Sato H."/>
            <person name="Nagai K."/>
            <person name="Kimura K."/>
            <person name="Makita H."/>
            <person name="Sekine M."/>
            <person name="Obayashi M."/>
            <person name="Nishi T."/>
            <person name="Shibahara T."/>
            <person name="Tanaka T."/>
            <person name="Ishii S."/>
            <person name="Yamamoto J."/>
            <person name="Saito K."/>
            <person name="Kawai Y."/>
            <person name="Isono Y."/>
            <person name="Nakamura Y."/>
            <person name="Nagahari K."/>
            <person name="Murakami K."/>
            <person name="Yasuda T."/>
            <person name="Iwayanagi T."/>
            <person name="Wagatsuma M."/>
            <person name="Shiratori A."/>
            <person name="Sudo H."/>
            <person name="Hosoiri T."/>
            <person name="Kaku Y."/>
            <person name="Kodaira H."/>
            <person name="Kondo H."/>
            <person name="Sugawara M."/>
            <person name="Takahashi M."/>
            <person name="Kanda K."/>
            <person name="Yokoi T."/>
            <person name="Furuya T."/>
            <person name="Kikkawa E."/>
            <person name="Omura Y."/>
            <person name="Abe K."/>
            <person name="Kamihara K."/>
            <person name="Katsuta N."/>
            <person name="Sato K."/>
            <person name="Tanikawa M."/>
            <person name="Yamazaki M."/>
            <person name="Ninomiya K."/>
            <person name="Ishibashi T."/>
            <person name="Yamashita H."/>
            <person name="Murakawa K."/>
            <person name="Fujimori K."/>
            <person name="Tanai H."/>
            <person name="Kimata M."/>
            <person name="Watanabe M."/>
            <person name="Hiraoka S."/>
            <person name="Chiba Y."/>
            <person name="Ishida S."/>
            <person name="Ono Y."/>
            <person name="Takiguchi S."/>
            <person name="Watanabe S."/>
            <person name="Yosida M."/>
            <person name="Hotuta T."/>
            <person name="Kusano J."/>
            <person name="Kanehori K."/>
            <person name="Takahashi-Fujii A."/>
            <person name="Hara H."/>
            <person name="Tanase T.-O."/>
            <person name="Nomura Y."/>
            <person name="Togiya S."/>
            <person name="Komai F."/>
            <person name="Hara R."/>
            <person name="Takeuchi K."/>
            <person name="Arita M."/>
            <person name="Imose N."/>
            <person name="Musashino K."/>
            <person name="Yuuki H."/>
            <person name="Oshima A."/>
            <person name="Sasaki N."/>
            <person name="Aotsuka S."/>
            <person name="Yoshikawa Y."/>
            <person name="Matsunawa H."/>
            <person name="Ichihara T."/>
            <person name="Shiohata N."/>
            <person name="Sano S."/>
            <person name="Moriya S."/>
            <person name="Momiyama H."/>
            <person name="Satoh N."/>
            <person name="Takami S."/>
            <person name="Terashima Y."/>
            <person name="Suzuki O."/>
            <person name="Nakagawa S."/>
            <person name="Senoh A."/>
            <person name="Mizoguchi H."/>
            <person name="Goto Y."/>
            <person name="Shimizu F."/>
            <person name="Wakebe H."/>
            <person name="Hishigaki H."/>
            <person name="Watanabe T."/>
            <person name="Sugiyama A."/>
            <person name="Takemoto M."/>
            <person name="Kawakami B."/>
            <person name="Yamazaki M."/>
            <person name="Watanabe K."/>
            <person name="Kumagai A."/>
            <person name="Itakura S."/>
            <person name="Fukuzumi Y."/>
            <person name="Fujimori Y."/>
            <person name="Komiyama M."/>
            <person name="Tashiro H."/>
            <person name="Tanigami A."/>
            <person name="Fujiwara T."/>
            <person name="Ono T."/>
            <person name="Yamada K."/>
            <person name="Fujii Y."/>
            <person name="Ozaki K."/>
            <person name="Hirao M."/>
            <person name="Ohmori Y."/>
            <person name="Kawabata A."/>
            <person name="Hikiji T."/>
            <person name="Kobatake N."/>
            <person name="Inagaki H."/>
            <person name="Ikema Y."/>
            <person name="Okamoto S."/>
            <person name="Okitani R."/>
            <person name="Kawakami T."/>
            <person name="Noguchi S."/>
            <person name="Itoh T."/>
            <person name="Shigeta K."/>
            <person name="Senba T."/>
            <person name="Matsumura K."/>
            <person name="Nakajima Y."/>
            <person name="Mizuno T."/>
            <person name="Morinaga M."/>
            <person name="Sasaki M."/>
            <person name="Togashi T."/>
            <person name="Oyama M."/>
            <person name="Hata H."/>
            <person name="Watanabe M."/>
            <person name="Komatsu T."/>
            <person name="Mizushima-Sugano J."/>
            <person name="Satoh T."/>
            <person name="Shirai Y."/>
            <person name="Takahashi Y."/>
            <person name="Nakagawa K."/>
            <person name="Okumura K."/>
            <person name="Nagase T."/>
            <person name="Nomura N."/>
            <person name="Kikuchi H."/>
            <person name="Masuho Y."/>
            <person name="Yamashita R."/>
            <person name="Nakai K."/>
            <person name="Yada T."/>
            <person name="Nakamura Y."/>
            <person name="Ohara O."/>
            <person name="Isogai T."/>
            <person name="Sugano S."/>
        </authorList>
    </citation>
    <scope>NUCLEOTIDE SEQUENCE [LARGE SCALE MRNA] (ISOFORM 1)</scope>
    <source>
        <tissue>Testis</tissue>
    </source>
</reference>
<reference key="4">
    <citation type="journal article" date="2007" name="BMC Genomics">
        <title>The full-ORF clone resource of the German cDNA consortium.</title>
        <authorList>
            <person name="Bechtel S."/>
            <person name="Rosenfelder H."/>
            <person name="Duda A."/>
            <person name="Schmidt C.P."/>
            <person name="Ernst U."/>
            <person name="Wellenreuther R."/>
            <person name="Mehrle A."/>
            <person name="Schuster C."/>
            <person name="Bahr A."/>
            <person name="Bloecker H."/>
            <person name="Heubner D."/>
            <person name="Hoerlein A."/>
            <person name="Michel G."/>
            <person name="Wedler H."/>
            <person name="Koehrer K."/>
            <person name="Ottenwaelder B."/>
            <person name="Poustka A."/>
            <person name="Wiemann S."/>
            <person name="Schupp I."/>
        </authorList>
    </citation>
    <scope>NUCLEOTIDE SEQUENCE [LARGE SCALE MRNA] (ISOFORMS 1 AND 5)</scope>
    <source>
        <tissue>Skeletal muscle</tissue>
        <tissue>Spinal cord</tissue>
    </source>
</reference>
<reference key="5">
    <citation type="submission" date="2005-09" db="EMBL/GenBank/DDBJ databases">
        <authorList>
            <person name="Mural R.J."/>
            <person name="Istrail S."/>
            <person name="Sutton G.G."/>
            <person name="Florea L."/>
            <person name="Halpern A.L."/>
            <person name="Mobarry C.M."/>
            <person name="Lippert R."/>
            <person name="Walenz B."/>
            <person name="Shatkay H."/>
            <person name="Dew I."/>
            <person name="Miller J.R."/>
            <person name="Flanigan M.J."/>
            <person name="Edwards N.J."/>
            <person name="Bolanos R."/>
            <person name="Fasulo D."/>
            <person name="Halldorsson B.V."/>
            <person name="Hannenhalli S."/>
            <person name="Turner R."/>
            <person name="Yooseph S."/>
            <person name="Lu F."/>
            <person name="Nusskern D.R."/>
            <person name="Shue B.C."/>
            <person name="Zheng X.H."/>
            <person name="Zhong F."/>
            <person name="Delcher A.L."/>
            <person name="Huson D.H."/>
            <person name="Kravitz S.A."/>
            <person name="Mouchard L."/>
            <person name="Reinert K."/>
            <person name="Remington K.A."/>
            <person name="Clark A.G."/>
            <person name="Waterman M.S."/>
            <person name="Eichler E.E."/>
            <person name="Adams M.D."/>
            <person name="Hunkapiller M.W."/>
            <person name="Myers E.W."/>
            <person name="Venter J.C."/>
        </authorList>
    </citation>
    <scope>NUCLEOTIDE SEQUENCE [LARGE SCALE GENOMIC DNA]</scope>
</reference>
<reference key="6">
    <citation type="journal article" date="2004" name="Genome Res.">
        <title>The status, quality, and expansion of the NIH full-length cDNA project: the Mammalian Gene Collection (MGC).</title>
        <authorList>
            <consortium name="The MGC Project Team"/>
        </authorList>
    </citation>
    <scope>NUCLEOTIDE SEQUENCE [LARGE SCALE MRNA] (ISOFORM 1)</scope>
    <source>
        <tissue>Uterus</tissue>
    </source>
</reference>
<reference key="7">
    <citation type="journal article" date="2008" name="Proc. Natl. Acad. Sci. U.S.A.">
        <title>A quantitative atlas of mitotic phosphorylation.</title>
        <authorList>
            <person name="Dephoure N."/>
            <person name="Zhou C."/>
            <person name="Villen J."/>
            <person name="Beausoleil S.A."/>
            <person name="Bakalarski C.E."/>
            <person name="Elledge S.J."/>
            <person name="Gygi S.P."/>
        </authorList>
    </citation>
    <scope>PHOSPHORYLATION [LARGE SCALE ANALYSIS] AT SER-408</scope>
    <scope>IDENTIFICATION BY MASS SPECTROMETRY [LARGE SCALE ANALYSIS]</scope>
    <source>
        <tissue>Cervix carcinoma</tissue>
    </source>
</reference>
<reference key="8">
    <citation type="journal article" date="2011" name="BMC Syst. Biol.">
        <title>Initial characterization of the human central proteome.</title>
        <authorList>
            <person name="Burkard T.R."/>
            <person name="Planyavsky M."/>
            <person name="Kaupe I."/>
            <person name="Breitwieser F.P."/>
            <person name="Buerckstuemmer T."/>
            <person name="Bennett K.L."/>
            <person name="Superti-Furga G."/>
            <person name="Colinge J."/>
        </authorList>
    </citation>
    <scope>IDENTIFICATION BY MASS SPECTROMETRY [LARGE SCALE ANALYSIS]</scope>
</reference>
<reference key="9">
    <citation type="journal article" date="2013" name="J. Proteome Res.">
        <title>Toward a comprehensive characterization of a human cancer cell phosphoproteome.</title>
        <authorList>
            <person name="Zhou H."/>
            <person name="Di Palma S."/>
            <person name="Preisinger C."/>
            <person name="Peng M."/>
            <person name="Polat A.N."/>
            <person name="Heck A.J."/>
            <person name="Mohammed S."/>
        </authorList>
    </citation>
    <scope>PHOSPHORYLATION [LARGE SCALE ANALYSIS] AT SER-209 AND SER-408</scope>
    <scope>IDENTIFICATION BY MASS SPECTROMETRY [LARGE SCALE ANALYSIS]</scope>
    <source>
        <tissue>Cervix carcinoma</tissue>
        <tissue>Erythroleukemia</tissue>
    </source>
</reference>
<reference key="10">
    <citation type="journal article" date="2014" name="J. Proteomics">
        <title>An enzyme assisted RP-RPLC approach for in-depth analysis of human liver phosphoproteome.</title>
        <authorList>
            <person name="Bian Y."/>
            <person name="Song C."/>
            <person name="Cheng K."/>
            <person name="Dong M."/>
            <person name="Wang F."/>
            <person name="Huang J."/>
            <person name="Sun D."/>
            <person name="Wang L."/>
            <person name="Ye M."/>
            <person name="Zou H."/>
        </authorList>
    </citation>
    <scope>IDENTIFICATION BY MASS SPECTROMETRY [LARGE SCALE ANALYSIS]</scope>
    <source>
        <tissue>Liver</tissue>
    </source>
</reference>
<reference key="11">
    <citation type="journal article" date="2010" name="J. Biol. Chem.">
        <title>Mys protein regulates protein kinase A activity by interacting with regulatory type Ialpha subunit during vertebrate development.</title>
        <authorList>
            <person name="Kotani T."/>
            <person name="Iemura S."/>
            <person name="Natsume T."/>
            <person name="Kawakami K."/>
            <person name="Yamashita M."/>
        </authorList>
    </citation>
    <scope>TISSUE SPECIFICITY</scope>
    <scope>INTERACTION WITH PRKAR1A</scope>
</reference>
<evidence type="ECO:0000250" key="1">
    <source>
        <dbReference type="UniProtKB" id="Q5XJA3"/>
    </source>
</evidence>
<evidence type="ECO:0000256" key="2">
    <source>
        <dbReference type="SAM" id="MobiDB-lite"/>
    </source>
</evidence>
<evidence type="ECO:0000269" key="3">
    <source>
    </source>
</evidence>
<evidence type="ECO:0000269" key="4">
    <source>
    </source>
</evidence>
<evidence type="ECO:0000303" key="5">
    <source>
    </source>
</evidence>
<evidence type="ECO:0000303" key="6">
    <source>
    </source>
</evidence>
<evidence type="ECO:0000305" key="7"/>
<evidence type="ECO:0007744" key="8">
    <source>
    </source>
</evidence>
<evidence type="ECO:0007744" key="9">
    <source>
    </source>
</evidence>
<comment type="function">
    <text evidence="1">May act as a regulator of the protein kinase A (PKA) activity during embryonic development.</text>
</comment>
<comment type="subunit">
    <text evidence="4">Interacts with PRKAR1A; resulting in PKA activation.</text>
</comment>
<comment type="interaction">
    <interactant intactId="EBI-2560879">
        <id>Q96M27</id>
    </interactant>
    <interactant intactId="EBI-466029">
        <id>P42858</id>
        <label>HTT</label>
    </interactant>
    <organismsDiffer>false</organismsDiffer>
    <experiments>7</experiments>
</comment>
<comment type="interaction">
    <interactant intactId="EBI-2560879">
        <id>Q96M27</id>
    </interactant>
    <interactant intactId="EBI-714158">
        <id>Q13526</id>
        <label>PIN1</label>
    </interactant>
    <organismsDiffer>false</organismsDiffer>
    <experiments>3</experiments>
</comment>
<comment type="interaction">
    <interactant intactId="EBI-2560879">
        <id>Q96M27</id>
    </interactant>
    <interactant intactId="EBI-742673">
        <id>Q15437</id>
        <label>SEC23B</label>
    </interactant>
    <organismsDiffer>false</organismsDiffer>
    <experiments>3</experiments>
</comment>
<comment type="interaction">
    <interactant intactId="EBI-2560879">
        <id>Q96M27</id>
    </interactant>
    <interactant intactId="EBI-346882">
        <id>Q99816</id>
        <label>TSG101</label>
    </interactant>
    <organismsDiffer>false</organismsDiffer>
    <experiments>2</experiments>
</comment>
<comment type="subcellular location">
    <subcellularLocation>
        <location evidence="3">Golgi apparatus</location>
    </subcellularLocation>
    <subcellularLocation>
        <location evidence="1">Cytoplasm</location>
    </subcellularLocation>
</comment>
<comment type="alternative products">
    <event type="alternative splicing"/>
    <isoform>
        <id>Q96M27-1</id>
        <name>1</name>
        <sequence type="displayed"/>
    </isoform>
    <isoform>
        <id>Q96M27-2</id>
        <name>2</name>
        <sequence type="described" ref="VSP_028724"/>
    </isoform>
    <isoform>
        <id>Q96M27-3</id>
        <name>3</name>
        <sequence type="described" ref="VSP_028725"/>
    </isoform>
    <isoform>
        <id>Q96M27-4</id>
        <name>4</name>
        <sequence type="described" ref="VSP_028720 VSP_028721"/>
    </isoform>
    <isoform>
        <id>Q96M27-5</id>
        <name>5</name>
        <sequence type="described" ref="VSP_028722 VSP_028723"/>
    </isoform>
</comment>
<comment type="tissue specificity">
    <text evidence="3 4">Ubiquitously expressed with higher expression in kidney, liver and placenta (PubMed:15541471). Detected in embryonic kidney cells (HEK293 cells) (at protein level) (PubMed:20018846).</text>
</comment>
<comment type="tissue specificity">
    <molecule>Isoform 4</molecule>
    <text evidence="3">Specifically expressed in liver.</text>
</comment>
<comment type="miscellaneous">
    <molecule>Isoform 2</molecule>
    <text evidence="7">Non-canonical splice sites for exon 9 and exon 10.</text>
</comment>
<comment type="similarity">
    <text evidence="7">Belongs to the PRRC1 family.</text>
</comment>
<comment type="sequence caution" evidence="7">
    <conflict type="erroneous initiation">
        <sequence resource="EMBL-CDS" id="AAH17066"/>
    </conflict>
</comment>
<comment type="sequence caution" evidence="7">
    <conflict type="frameshift">
        <sequence resource="EMBL-CDS" id="BAC03467"/>
    </conflict>
</comment>
<proteinExistence type="evidence at protein level"/>
<gene>
    <name type="primary">PRRC1</name>
</gene>